<reference key="1">
    <citation type="journal article" date="1997" name="DNA Res.">
        <title>Characterization of cDNA clones in size-fractionated cDNA libraries from human brain.</title>
        <authorList>
            <person name="Seki N."/>
            <person name="Ohira M."/>
            <person name="Nagase T."/>
            <person name="Ishikawa K."/>
            <person name="Miyajima N."/>
            <person name="Nakajima D."/>
            <person name="Nomura N."/>
            <person name="Ohara O."/>
        </authorList>
    </citation>
    <scope>NUCLEOTIDE SEQUENCE [LARGE SCALE MRNA]</scope>
    <source>
        <tissue>Brain</tissue>
    </source>
</reference>
<reference key="2">
    <citation type="journal article" date="2005" name="DNA Res.">
        <title>Signal sequence and keyword trap in silico for selection of full-length human cDNAs encoding secretion or membrane proteins from oligo-capped cDNA libraries.</title>
        <authorList>
            <person name="Otsuki T."/>
            <person name="Ota T."/>
            <person name="Nishikawa T."/>
            <person name="Hayashi K."/>
            <person name="Suzuki Y."/>
            <person name="Yamamoto J."/>
            <person name="Wakamatsu A."/>
            <person name="Kimura K."/>
            <person name="Sakamoto K."/>
            <person name="Hatano N."/>
            <person name="Kawai Y."/>
            <person name="Ishii S."/>
            <person name="Saito K."/>
            <person name="Kojima S."/>
            <person name="Sugiyama T."/>
            <person name="Ono T."/>
            <person name="Okano K."/>
            <person name="Yoshikawa Y."/>
            <person name="Aotsuka S."/>
            <person name="Sasaki N."/>
            <person name="Hattori A."/>
            <person name="Okumura K."/>
            <person name="Nagai K."/>
            <person name="Sugano S."/>
            <person name="Isogai T."/>
        </authorList>
    </citation>
    <scope>NUCLEOTIDE SEQUENCE [LARGE SCALE MRNA]</scope>
</reference>
<reference key="3">
    <citation type="journal article" date="2006" name="Nature">
        <title>The DNA sequence and biological annotation of human chromosome 1.</title>
        <authorList>
            <person name="Gregory S.G."/>
            <person name="Barlow K.F."/>
            <person name="McLay K.E."/>
            <person name="Kaul R."/>
            <person name="Swarbreck D."/>
            <person name="Dunham A."/>
            <person name="Scott C.E."/>
            <person name="Howe K.L."/>
            <person name="Woodfine K."/>
            <person name="Spencer C.C.A."/>
            <person name="Jones M.C."/>
            <person name="Gillson C."/>
            <person name="Searle S."/>
            <person name="Zhou Y."/>
            <person name="Kokocinski F."/>
            <person name="McDonald L."/>
            <person name="Evans R."/>
            <person name="Phillips K."/>
            <person name="Atkinson A."/>
            <person name="Cooper R."/>
            <person name="Jones C."/>
            <person name="Hall R.E."/>
            <person name="Andrews T.D."/>
            <person name="Lloyd C."/>
            <person name="Ainscough R."/>
            <person name="Almeida J.P."/>
            <person name="Ambrose K.D."/>
            <person name="Anderson F."/>
            <person name="Andrew R.W."/>
            <person name="Ashwell R.I.S."/>
            <person name="Aubin K."/>
            <person name="Babbage A.K."/>
            <person name="Bagguley C.L."/>
            <person name="Bailey J."/>
            <person name="Beasley H."/>
            <person name="Bethel G."/>
            <person name="Bird C.P."/>
            <person name="Bray-Allen S."/>
            <person name="Brown J.Y."/>
            <person name="Brown A.J."/>
            <person name="Buckley D."/>
            <person name="Burton J."/>
            <person name="Bye J."/>
            <person name="Carder C."/>
            <person name="Chapman J.C."/>
            <person name="Clark S.Y."/>
            <person name="Clarke G."/>
            <person name="Clee C."/>
            <person name="Cobley V."/>
            <person name="Collier R.E."/>
            <person name="Corby N."/>
            <person name="Coville G.J."/>
            <person name="Davies J."/>
            <person name="Deadman R."/>
            <person name="Dunn M."/>
            <person name="Earthrowl M."/>
            <person name="Ellington A.G."/>
            <person name="Errington H."/>
            <person name="Frankish A."/>
            <person name="Frankland J."/>
            <person name="French L."/>
            <person name="Garner P."/>
            <person name="Garnett J."/>
            <person name="Gay L."/>
            <person name="Ghori M.R.J."/>
            <person name="Gibson R."/>
            <person name="Gilby L.M."/>
            <person name="Gillett W."/>
            <person name="Glithero R.J."/>
            <person name="Grafham D.V."/>
            <person name="Griffiths C."/>
            <person name="Griffiths-Jones S."/>
            <person name="Grocock R."/>
            <person name="Hammond S."/>
            <person name="Harrison E.S.I."/>
            <person name="Hart E."/>
            <person name="Haugen E."/>
            <person name="Heath P.D."/>
            <person name="Holmes S."/>
            <person name="Holt K."/>
            <person name="Howden P.J."/>
            <person name="Hunt A.R."/>
            <person name="Hunt S.E."/>
            <person name="Hunter G."/>
            <person name="Isherwood J."/>
            <person name="James R."/>
            <person name="Johnson C."/>
            <person name="Johnson D."/>
            <person name="Joy A."/>
            <person name="Kay M."/>
            <person name="Kershaw J.K."/>
            <person name="Kibukawa M."/>
            <person name="Kimberley A.M."/>
            <person name="King A."/>
            <person name="Knights A.J."/>
            <person name="Lad H."/>
            <person name="Laird G."/>
            <person name="Lawlor S."/>
            <person name="Leongamornlert D.A."/>
            <person name="Lloyd D.M."/>
            <person name="Loveland J."/>
            <person name="Lovell J."/>
            <person name="Lush M.J."/>
            <person name="Lyne R."/>
            <person name="Martin S."/>
            <person name="Mashreghi-Mohammadi M."/>
            <person name="Matthews L."/>
            <person name="Matthews N.S.W."/>
            <person name="McLaren S."/>
            <person name="Milne S."/>
            <person name="Mistry S."/>
            <person name="Moore M.J.F."/>
            <person name="Nickerson T."/>
            <person name="O'Dell C.N."/>
            <person name="Oliver K."/>
            <person name="Palmeiri A."/>
            <person name="Palmer S.A."/>
            <person name="Parker A."/>
            <person name="Patel D."/>
            <person name="Pearce A.V."/>
            <person name="Peck A.I."/>
            <person name="Pelan S."/>
            <person name="Phelps K."/>
            <person name="Phillimore B.J."/>
            <person name="Plumb R."/>
            <person name="Rajan J."/>
            <person name="Raymond C."/>
            <person name="Rouse G."/>
            <person name="Saenphimmachak C."/>
            <person name="Sehra H.K."/>
            <person name="Sheridan E."/>
            <person name="Shownkeen R."/>
            <person name="Sims S."/>
            <person name="Skuce C.D."/>
            <person name="Smith M."/>
            <person name="Steward C."/>
            <person name="Subramanian S."/>
            <person name="Sycamore N."/>
            <person name="Tracey A."/>
            <person name="Tromans A."/>
            <person name="Van Helmond Z."/>
            <person name="Wall M."/>
            <person name="Wallis J.M."/>
            <person name="White S."/>
            <person name="Whitehead S.L."/>
            <person name="Wilkinson J.E."/>
            <person name="Willey D.L."/>
            <person name="Williams H."/>
            <person name="Wilming L."/>
            <person name="Wray P.W."/>
            <person name="Wu Z."/>
            <person name="Coulson A."/>
            <person name="Vaudin M."/>
            <person name="Sulston J.E."/>
            <person name="Durbin R.M."/>
            <person name="Hubbard T."/>
            <person name="Wooster R."/>
            <person name="Dunham I."/>
            <person name="Carter N.P."/>
            <person name="McVean G."/>
            <person name="Ross M.T."/>
            <person name="Harrow J."/>
            <person name="Olson M.V."/>
            <person name="Beck S."/>
            <person name="Rogers J."/>
            <person name="Bentley D.R."/>
        </authorList>
    </citation>
    <scope>NUCLEOTIDE SEQUENCE [LARGE SCALE GENOMIC DNA]</scope>
</reference>
<reference key="4">
    <citation type="journal article" date="2004" name="Genome Res.">
        <title>The status, quality, and expansion of the NIH full-length cDNA project: the Mammalian Gene Collection (MGC).</title>
        <authorList>
            <consortium name="The MGC Project Team"/>
        </authorList>
    </citation>
    <scope>NUCLEOTIDE SEQUENCE [LARGE SCALE MRNA]</scope>
    <source>
        <tissue>Brain</tissue>
        <tissue>Skin</tissue>
    </source>
</reference>
<reference key="5">
    <citation type="journal article" date="2006" name="Genomics">
        <title>Fourteen novel human members of mitochondrial solute carrier family 25 (SLC25) widely expressed in the central nervous system.</title>
        <authorList>
            <person name="Haitina T."/>
            <person name="Lindblom J."/>
            <person name="Renstroem T."/>
            <person name="Fredriksson R."/>
        </authorList>
    </citation>
    <scope>IDENTIFICATION</scope>
</reference>
<reference key="6">
    <citation type="journal article" date="2019" name="Nature">
        <title>BCAA catabolism in brown fat controls energy homeostasis through SLC25A44.</title>
        <authorList>
            <person name="Yoneshiro T."/>
            <person name="Wang Q."/>
            <person name="Tajima K."/>
            <person name="Matsushita M."/>
            <person name="Maki H."/>
            <person name="Igarashi K."/>
            <person name="Dai Z."/>
            <person name="White P.J."/>
            <person name="McGarrah R.W."/>
            <person name="Ilkayeva O.R."/>
            <person name="Deleye Y."/>
            <person name="Oguri Y."/>
            <person name="Kuroda M."/>
            <person name="Ikeda K."/>
            <person name="Li H."/>
            <person name="Ueno A."/>
            <person name="Ohishi M."/>
            <person name="Ishikawa T."/>
            <person name="Kim K."/>
            <person name="Chen Y."/>
            <person name="Sponton C.H."/>
            <person name="Pradhan R.N."/>
            <person name="Majd H."/>
            <person name="Greiner V.J."/>
            <person name="Yoneshiro M."/>
            <person name="Brown Z."/>
            <person name="Chondronikola M."/>
            <person name="Takahashi H."/>
            <person name="Goto T."/>
            <person name="Kawada T."/>
            <person name="Sidossis L."/>
            <person name="Szoka F.C."/>
            <person name="McManus M.T."/>
            <person name="Saito M."/>
            <person name="Soga T."/>
            <person name="Kajimura S."/>
        </authorList>
    </citation>
    <scope>FUNCTION</scope>
    <scope>INDUCTION BY COLD</scope>
</reference>
<dbReference type="EMBL" id="AB007915">
    <property type="protein sequence ID" value="BAA32291.3"/>
    <property type="status" value="ALT_INIT"/>
    <property type="molecule type" value="mRNA"/>
</dbReference>
<dbReference type="EMBL" id="AK074912">
    <property type="protein sequence ID" value="BAC11287.1"/>
    <property type="molecule type" value="mRNA"/>
</dbReference>
<dbReference type="EMBL" id="AK075002">
    <property type="protein sequence ID" value="BAC11347.1"/>
    <property type="molecule type" value="mRNA"/>
</dbReference>
<dbReference type="EMBL" id="AL135927">
    <property type="status" value="NOT_ANNOTATED_CDS"/>
    <property type="molecule type" value="Genomic_DNA"/>
</dbReference>
<dbReference type="EMBL" id="BC008843">
    <property type="protein sequence ID" value="AAH08843.1"/>
    <property type="molecule type" value="mRNA"/>
</dbReference>
<dbReference type="EMBL" id="BC039854">
    <property type="protein sequence ID" value="AAH39854.1"/>
    <property type="molecule type" value="mRNA"/>
</dbReference>
<dbReference type="CCDS" id="CCDS1133.1"/>
<dbReference type="RefSeq" id="NP_001273113.1">
    <property type="nucleotide sequence ID" value="NM_001286184.1"/>
</dbReference>
<dbReference type="RefSeq" id="NP_001364315.1">
    <property type="nucleotide sequence ID" value="NM_001377386.1"/>
</dbReference>
<dbReference type="RefSeq" id="NP_001364316.1">
    <property type="nucleotide sequence ID" value="NM_001377387.1"/>
</dbReference>
<dbReference type="RefSeq" id="NP_001364317.1">
    <property type="nucleotide sequence ID" value="NM_001377388.1"/>
</dbReference>
<dbReference type="RefSeq" id="NP_055470.1">
    <property type="nucleotide sequence ID" value="NM_014655.4"/>
</dbReference>
<dbReference type="RefSeq" id="XP_006711720.1">
    <property type="nucleotide sequence ID" value="XM_006711657.3"/>
</dbReference>
<dbReference type="RefSeq" id="XP_011508482.1">
    <property type="nucleotide sequence ID" value="XM_011510180.1"/>
</dbReference>
<dbReference type="RefSeq" id="XP_011508483.1">
    <property type="nucleotide sequence ID" value="XM_011510181.1"/>
</dbReference>
<dbReference type="RefSeq" id="XP_016858393.1">
    <property type="nucleotide sequence ID" value="XM_017002904.1"/>
</dbReference>
<dbReference type="RefSeq" id="XP_016858394.1">
    <property type="nucleotide sequence ID" value="XM_017002905.1"/>
</dbReference>
<dbReference type="RefSeq" id="XP_016858395.1">
    <property type="nucleotide sequence ID" value="XM_017002906.1"/>
</dbReference>
<dbReference type="RefSeq" id="XP_047291054.1">
    <property type="nucleotide sequence ID" value="XM_047435098.1"/>
</dbReference>
<dbReference type="RefSeq" id="XP_047291057.1">
    <property type="nucleotide sequence ID" value="XM_047435101.1"/>
</dbReference>
<dbReference type="RefSeq" id="XP_054195721.1">
    <property type="nucleotide sequence ID" value="XM_054339746.1"/>
</dbReference>
<dbReference type="RefSeq" id="XP_054195722.1">
    <property type="nucleotide sequence ID" value="XM_054339747.1"/>
</dbReference>
<dbReference type="BioGRID" id="115028">
    <property type="interactions" value="11"/>
</dbReference>
<dbReference type="FunCoup" id="Q96H78">
    <property type="interactions" value="2209"/>
</dbReference>
<dbReference type="IntAct" id="Q96H78">
    <property type="interactions" value="4"/>
</dbReference>
<dbReference type="STRING" id="9606.ENSP00000407560"/>
<dbReference type="TCDB" id="2.A.29.14.7">
    <property type="family name" value="the mitochondrial carrier (mc) family"/>
</dbReference>
<dbReference type="iPTMnet" id="Q96H78"/>
<dbReference type="PhosphoSitePlus" id="Q96H78"/>
<dbReference type="BioMuta" id="SLC25A44"/>
<dbReference type="DMDM" id="74751902"/>
<dbReference type="jPOST" id="Q96H78"/>
<dbReference type="MassIVE" id="Q96H78"/>
<dbReference type="PaxDb" id="9606-ENSP00000407560"/>
<dbReference type="PeptideAtlas" id="Q96H78"/>
<dbReference type="ProteomicsDB" id="76709"/>
<dbReference type="Pumba" id="Q96H78"/>
<dbReference type="Antibodypedia" id="47042">
    <property type="antibodies" value="25 antibodies from 11 providers"/>
</dbReference>
<dbReference type="DNASU" id="9673"/>
<dbReference type="Ensembl" id="ENST00000359511.5">
    <property type="protein sequence ID" value="ENSP00000352497.4"/>
    <property type="gene ID" value="ENSG00000160785.14"/>
</dbReference>
<dbReference type="GeneID" id="9673"/>
<dbReference type="KEGG" id="hsa:9673"/>
<dbReference type="MANE-Select" id="ENST00000359511.5">
    <property type="protein sequence ID" value="ENSP00000352497.4"/>
    <property type="RefSeq nucleotide sequence ID" value="NM_014655.4"/>
    <property type="RefSeq protein sequence ID" value="NP_055470.1"/>
</dbReference>
<dbReference type="UCSC" id="uc001fnp.5">
    <property type="organism name" value="human"/>
</dbReference>
<dbReference type="AGR" id="HGNC:29036"/>
<dbReference type="CTD" id="9673"/>
<dbReference type="DisGeNET" id="9673"/>
<dbReference type="GeneCards" id="SLC25A44"/>
<dbReference type="HGNC" id="HGNC:29036">
    <property type="gene designation" value="SLC25A44"/>
</dbReference>
<dbReference type="HPA" id="ENSG00000160785">
    <property type="expression patterns" value="Low tissue specificity"/>
</dbReference>
<dbReference type="MIM" id="610824">
    <property type="type" value="gene"/>
</dbReference>
<dbReference type="neXtProt" id="NX_Q96H78"/>
<dbReference type="OpenTargets" id="ENSG00000160785"/>
<dbReference type="PharmGKB" id="PA162403705"/>
<dbReference type="VEuPathDB" id="HostDB:ENSG00000160785"/>
<dbReference type="eggNOG" id="KOG0765">
    <property type="taxonomic scope" value="Eukaryota"/>
</dbReference>
<dbReference type="GeneTree" id="ENSGT00940000155399"/>
<dbReference type="HOGENOM" id="CLU_015166_3_3_1"/>
<dbReference type="InParanoid" id="Q96H78"/>
<dbReference type="OMA" id="GPSGILM"/>
<dbReference type="OrthoDB" id="250329at2759"/>
<dbReference type="PAN-GO" id="Q96H78">
    <property type="GO annotations" value="3 GO annotations based on evolutionary models"/>
</dbReference>
<dbReference type="PhylomeDB" id="Q96H78"/>
<dbReference type="TreeFam" id="TF354268"/>
<dbReference type="PathwayCommons" id="Q96H78"/>
<dbReference type="Reactome" id="R-HSA-70895">
    <property type="pathway name" value="Branched-chain amino acid catabolism"/>
</dbReference>
<dbReference type="SignaLink" id="Q96H78"/>
<dbReference type="BioGRID-ORCS" id="9673">
    <property type="hits" value="13 hits in 1160 CRISPR screens"/>
</dbReference>
<dbReference type="ChiTaRS" id="SLC25A44">
    <property type="organism name" value="human"/>
</dbReference>
<dbReference type="GenomeRNAi" id="9673"/>
<dbReference type="Pharos" id="Q96H78">
    <property type="development level" value="Tdark"/>
</dbReference>
<dbReference type="PRO" id="PR:Q96H78"/>
<dbReference type="Proteomes" id="UP000005640">
    <property type="component" value="Chromosome 1"/>
</dbReference>
<dbReference type="RNAct" id="Q96H78">
    <property type="molecule type" value="protein"/>
</dbReference>
<dbReference type="Bgee" id="ENSG00000160785">
    <property type="expression patterns" value="Expressed in prefrontal cortex and 172 other cell types or tissues"/>
</dbReference>
<dbReference type="ExpressionAtlas" id="Q96H78">
    <property type="expression patterns" value="baseline and differential"/>
</dbReference>
<dbReference type="GO" id="GO:0031966">
    <property type="term" value="C:mitochondrial membrane"/>
    <property type="evidence" value="ECO:0007669"/>
    <property type="project" value="UniProtKB-SubCell"/>
</dbReference>
<dbReference type="GO" id="GO:0005739">
    <property type="term" value="C:mitochondrion"/>
    <property type="evidence" value="ECO:0006056"/>
    <property type="project" value="FlyBase"/>
</dbReference>
<dbReference type="GO" id="GO:0015658">
    <property type="term" value="F:branched-chain amino acid transmembrane transporter activity"/>
    <property type="evidence" value="ECO:0000250"/>
    <property type="project" value="UniProtKB"/>
</dbReference>
<dbReference type="GO" id="GO:0006865">
    <property type="term" value="P:amino acid transport"/>
    <property type="evidence" value="ECO:0007669"/>
    <property type="project" value="UniProtKB-KW"/>
</dbReference>
<dbReference type="GO" id="GO:0009083">
    <property type="term" value="P:branched-chain amino acid catabolic process"/>
    <property type="evidence" value="ECO:0000315"/>
    <property type="project" value="UniProtKB"/>
</dbReference>
<dbReference type="GO" id="GO:0015803">
    <property type="term" value="P:branched-chain amino acid transport"/>
    <property type="evidence" value="ECO:0000250"/>
    <property type="project" value="UniProtKB"/>
</dbReference>
<dbReference type="GO" id="GO:0120161">
    <property type="term" value="P:regulation of cold-induced thermogenesis"/>
    <property type="evidence" value="ECO:0000250"/>
    <property type="project" value="UniProtKB"/>
</dbReference>
<dbReference type="FunFam" id="1.50.40.10:FF:000033">
    <property type="entry name" value="Solute carrier family 25 member 44"/>
    <property type="match status" value="1"/>
</dbReference>
<dbReference type="FunFam" id="1.50.40.10:FF:000108">
    <property type="entry name" value="Solute carrier family 25 member 44"/>
    <property type="match status" value="1"/>
</dbReference>
<dbReference type="Gene3D" id="1.50.40.10">
    <property type="entry name" value="Mitochondrial carrier domain"/>
    <property type="match status" value="2"/>
</dbReference>
<dbReference type="InterPro" id="IPR002067">
    <property type="entry name" value="Mit_carrier"/>
</dbReference>
<dbReference type="InterPro" id="IPR018108">
    <property type="entry name" value="Mitochondrial_sb/sol_carrier"/>
</dbReference>
<dbReference type="InterPro" id="IPR023395">
    <property type="entry name" value="Mt_carrier_dom_sf"/>
</dbReference>
<dbReference type="InterPro" id="IPR042164">
    <property type="entry name" value="SLC25A44"/>
</dbReference>
<dbReference type="PANTHER" id="PTHR46314">
    <property type="entry name" value="SOLUTE CARRIER FAMILY 25 MEMBER 44"/>
    <property type="match status" value="1"/>
</dbReference>
<dbReference type="PANTHER" id="PTHR46314:SF2">
    <property type="entry name" value="SOLUTE CARRIER FAMILY 25 MEMBER 44"/>
    <property type="match status" value="1"/>
</dbReference>
<dbReference type="Pfam" id="PF00153">
    <property type="entry name" value="Mito_carr"/>
    <property type="match status" value="3"/>
</dbReference>
<dbReference type="PRINTS" id="PR00926">
    <property type="entry name" value="MITOCARRIER"/>
</dbReference>
<dbReference type="SUPFAM" id="SSF103506">
    <property type="entry name" value="Mitochondrial carrier"/>
    <property type="match status" value="1"/>
</dbReference>
<dbReference type="PROSITE" id="PS50920">
    <property type="entry name" value="SOLCAR"/>
    <property type="match status" value="3"/>
</dbReference>
<gene>
    <name evidence="5 7" type="primary">SLC25A44</name>
    <name type="synonym">KIAA0446</name>
</gene>
<protein>
    <recommendedName>
        <fullName>Solute carrier family 25 member 44</fullName>
    </recommendedName>
</protein>
<organism>
    <name type="scientific">Homo sapiens</name>
    <name type="common">Human</name>
    <dbReference type="NCBI Taxonomy" id="9606"/>
    <lineage>
        <taxon>Eukaryota</taxon>
        <taxon>Metazoa</taxon>
        <taxon>Chordata</taxon>
        <taxon>Craniata</taxon>
        <taxon>Vertebrata</taxon>
        <taxon>Euteleostomi</taxon>
        <taxon>Mammalia</taxon>
        <taxon>Eutheria</taxon>
        <taxon>Euarchontoglires</taxon>
        <taxon>Primates</taxon>
        <taxon>Haplorrhini</taxon>
        <taxon>Catarrhini</taxon>
        <taxon>Hominidae</taxon>
        <taxon>Homo</taxon>
    </lineage>
</organism>
<evidence type="ECO:0000250" key="1">
    <source>
        <dbReference type="UniProtKB" id="Q8BGF9"/>
    </source>
</evidence>
<evidence type="ECO:0000255" key="2"/>
<evidence type="ECO:0000255" key="3">
    <source>
        <dbReference type="PROSITE-ProRule" id="PRU00282"/>
    </source>
</evidence>
<evidence type="ECO:0000269" key="4">
    <source>
    </source>
</evidence>
<evidence type="ECO:0000303" key="5">
    <source>
    </source>
</evidence>
<evidence type="ECO:0000305" key="6"/>
<evidence type="ECO:0000312" key="7">
    <source>
        <dbReference type="HGNC" id="HGNC:29036"/>
    </source>
</evidence>
<comment type="function">
    <text evidence="1 4">Mitochondrial solute transporter which transports branched-chain amino acid (BCAA; valine, leucine and isoleucine) into mitochondria in brown adipose tissue (BAT) (By similarity). BAT is involved in BCAA catabolism and actively utilizes BCAA in the mitochondria for thermogenesis (PubMed:31435015).</text>
</comment>
<comment type="catalytic activity">
    <reaction evidence="1">
        <text>L-valine(in) = L-valine(out)</text>
        <dbReference type="Rhea" id="RHEA:29703"/>
        <dbReference type="ChEBI" id="CHEBI:57762"/>
    </reaction>
</comment>
<comment type="catalytic activity">
    <reaction evidence="1">
        <text>L-leucine(in) = L-leucine(out)</text>
        <dbReference type="Rhea" id="RHEA:73011"/>
        <dbReference type="ChEBI" id="CHEBI:57427"/>
    </reaction>
</comment>
<comment type="subcellular location">
    <subcellularLocation>
        <location evidence="1">Mitochondrion membrane</location>
        <topology evidence="2">Multi-pass membrane protein</topology>
    </subcellularLocation>
</comment>
<comment type="induction">
    <text evidence="4">Induction by cold exposure in brown adipose tissues.</text>
</comment>
<comment type="similarity">
    <text evidence="2">Belongs to the mitochondrial carrier (TC 2.A.29) family.</text>
</comment>
<comment type="sequence caution" evidence="6">
    <conflict type="erroneous initiation">
        <sequence resource="EMBL-CDS" id="BAA32291"/>
    </conflict>
</comment>
<proteinExistence type="evidence at protein level"/>
<keyword id="KW-0029">Amino-acid transport</keyword>
<keyword id="KW-0472">Membrane</keyword>
<keyword id="KW-0496">Mitochondrion</keyword>
<keyword id="KW-1267">Proteomics identification</keyword>
<keyword id="KW-1185">Reference proteome</keyword>
<keyword id="KW-0677">Repeat</keyword>
<keyword id="KW-0812">Transmembrane</keyword>
<keyword id="KW-1133">Transmembrane helix</keyword>
<keyword id="KW-0813">Transport</keyword>
<feature type="chain" id="PRO_0000253064" description="Solute carrier family 25 member 44">
    <location>
        <begin position="1"/>
        <end position="314"/>
    </location>
</feature>
<feature type="transmembrane region" description="Helical; Name=1" evidence="2">
    <location>
        <begin position="20"/>
        <end position="42"/>
    </location>
</feature>
<feature type="transmembrane region" description="Helical; Name=2" evidence="2">
    <location>
        <begin position="71"/>
        <end position="90"/>
    </location>
</feature>
<feature type="transmembrane region" description="Helical; Name=3" evidence="2">
    <location>
        <begin position="113"/>
        <end position="133"/>
    </location>
</feature>
<feature type="transmembrane region" description="Helical; Name=4" evidence="2">
    <location>
        <begin position="185"/>
        <end position="201"/>
    </location>
</feature>
<feature type="transmembrane region" description="Helical; Name=5" evidence="2">
    <location>
        <begin position="222"/>
        <end position="239"/>
    </location>
</feature>
<feature type="transmembrane region" description="Helical; Name=6" evidence="2">
    <location>
        <begin position="278"/>
        <end position="296"/>
    </location>
</feature>
<feature type="repeat" description="Solcar 1" evidence="3">
    <location>
        <begin position="18"/>
        <end position="100"/>
    </location>
</feature>
<feature type="repeat" description="Solcar 2" evidence="3">
    <location>
        <begin position="107"/>
        <end position="210"/>
    </location>
</feature>
<feature type="repeat" description="Solcar 3" evidence="3">
    <location>
        <begin position="220"/>
        <end position="302"/>
    </location>
</feature>
<feature type="sequence variant" id="VAR_050134" description="In dbSNP:rs11576750.">
    <original>S</original>
    <variation>I</variation>
    <location>
        <position position="52"/>
    </location>
</feature>
<feature type="sequence conflict" description="In Ref. 1; BAA32291." evidence="6" ref="1">
    <original>A</original>
    <variation>AAIVFPWIP</variation>
    <location>
        <position position="208"/>
    </location>
</feature>
<accession>Q96H78</accession>
<accession>O75034</accession>
<name>S2544_HUMAN</name>
<sequence>MEDKRNIQIIEWEHLDKKKFYVFGVAMTMMIRVSVYPFTLIRTRLQVQKGKSLYHGTFDAFIKILRADGITGLYRGFLVNTFTLISGQCYVTTYELTRKFVADYSQSNTVKSLVAGGSASLVAQSITVPIDVVSQHLMMQRKGEKMGRFQVRGNPEGQGVVAFGQTKDIIRQILQADGLRGFYRGYVASLLTYIPNSAVWWPFYHFYAEQLSYLCPKECPHIVFQAVSGPLAAATASILTNPMDVIRTRVQVEGKNSIILTFRQLMAEEGPWGLMKGLSARIISATPSTIVIVVGYESLKKLSLRPELVDSRHW</sequence>